<keyword id="KW-0068">Autocatalytic cleavage</keyword>
<keyword id="KW-0227">DNA damage</keyword>
<keyword id="KW-0234">DNA repair</keyword>
<keyword id="KW-0235">DNA replication</keyword>
<keyword id="KW-0238">DNA-binding</keyword>
<keyword id="KW-0378">Hydrolase</keyword>
<keyword id="KW-0678">Repressor</keyword>
<keyword id="KW-0742">SOS response</keyword>
<keyword id="KW-0804">Transcription</keyword>
<keyword id="KW-0805">Transcription regulation</keyword>
<comment type="function">
    <text evidence="1">Represses a number of genes involved in the response to DNA damage (SOS response), including recA and lexA. In the presence of single-stranded DNA, RecA interacts with LexA causing an autocatalytic cleavage which disrupts the DNA-binding part of LexA, leading to derepression of the SOS regulon and eventually DNA repair.</text>
</comment>
<comment type="catalytic activity">
    <reaction evidence="1">
        <text>Hydrolysis of Ala-|-Gly bond in repressor LexA.</text>
        <dbReference type="EC" id="3.4.21.88"/>
    </reaction>
</comment>
<comment type="subunit">
    <text evidence="1">Homodimer.</text>
</comment>
<comment type="similarity">
    <text evidence="1">Belongs to the peptidase S24 family.</text>
</comment>
<dbReference type="EC" id="3.4.21.88" evidence="1"/>
<dbReference type="EMBL" id="AF330820">
    <property type="protein sequence ID" value="AAK15316.1"/>
    <property type="molecule type" value="Genomic_DNA"/>
</dbReference>
<dbReference type="SMR" id="Q9AGM5"/>
<dbReference type="MEROPS" id="S24.001"/>
<dbReference type="GO" id="GO:0003677">
    <property type="term" value="F:DNA binding"/>
    <property type="evidence" value="ECO:0007669"/>
    <property type="project" value="UniProtKB-UniRule"/>
</dbReference>
<dbReference type="GO" id="GO:0004252">
    <property type="term" value="F:serine-type endopeptidase activity"/>
    <property type="evidence" value="ECO:0007669"/>
    <property type="project" value="UniProtKB-UniRule"/>
</dbReference>
<dbReference type="GO" id="GO:0006281">
    <property type="term" value="P:DNA repair"/>
    <property type="evidence" value="ECO:0007669"/>
    <property type="project" value="UniProtKB-UniRule"/>
</dbReference>
<dbReference type="GO" id="GO:0006260">
    <property type="term" value="P:DNA replication"/>
    <property type="evidence" value="ECO:0007669"/>
    <property type="project" value="UniProtKB-UniRule"/>
</dbReference>
<dbReference type="GO" id="GO:0045892">
    <property type="term" value="P:negative regulation of DNA-templated transcription"/>
    <property type="evidence" value="ECO:0007669"/>
    <property type="project" value="UniProtKB-UniRule"/>
</dbReference>
<dbReference type="GO" id="GO:0006508">
    <property type="term" value="P:proteolysis"/>
    <property type="evidence" value="ECO:0007669"/>
    <property type="project" value="InterPro"/>
</dbReference>
<dbReference type="GO" id="GO:0009432">
    <property type="term" value="P:SOS response"/>
    <property type="evidence" value="ECO:0007669"/>
    <property type="project" value="UniProtKB-UniRule"/>
</dbReference>
<dbReference type="CDD" id="cd06529">
    <property type="entry name" value="S24_LexA-like"/>
    <property type="match status" value="1"/>
</dbReference>
<dbReference type="FunFam" id="1.10.10.10:FF:000009">
    <property type="entry name" value="LexA repressor"/>
    <property type="match status" value="1"/>
</dbReference>
<dbReference type="FunFam" id="2.10.109.10:FF:000001">
    <property type="entry name" value="LexA repressor"/>
    <property type="match status" value="1"/>
</dbReference>
<dbReference type="Gene3D" id="2.10.109.10">
    <property type="entry name" value="Umud Fragment, subunit A"/>
    <property type="match status" value="1"/>
</dbReference>
<dbReference type="Gene3D" id="1.10.10.10">
    <property type="entry name" value="Winged helix-like DNA-binding domain superfamily/Winged helix DNA-binding domain"/>
    <property type="match status" value="1"/>
</dbReference>
<dbReference type="HAMAP" id="MF_00015">
    <property type="entry name" value="LexA"/>
    <property type="match status" value="1"/>
</dbReference>
<dbReference type="InterPro" id="IPR006200">
    <property type="entry name" value="LexA"/>
</dbReference>
<dbReference type="InterPro" id="IPR039418">
    <property type="entry name" value="LexA-like"/>
</dbReference>
<dbReference type="InterPro" id="IPR036286">
    <property type="entry name" value="LexA/Signal_pep-like_sf"/>
</dbReference>
<dbReference type="InterPro" id="IPR006199">
    <property type="entry name" value="LexA_DNA-bd_dom"/>
</dbReference>
<dbReference type="InterPro" id="IPR050077">
    <property type="entry name" value="LexA_repressor"/>
</dbReference>
<dbReference type="InterPro" id="IPR006197">
    <property type="entry name" value="Peptidase_S24_LexA"/>
</dbReference>
<dbReference type="InterPro" id="IPR015927">
    <property type="entry name" value="Peptidase_S24_S26A/B/C"/>
</dbReference>
<dbReference type="InterPro" id="IPR036388">
    <property type="entry name" value="WH-like_DNA-bd_sf"/>
</dbReference>
<dbReference type="InterPro" id="IPR036390">
    <property type="entry name" value="WH_DNA-bd_sf"/>
</dbReference>
<dbReference type="NCBIfam" id="TIGR00498">
    <property type="entry name" value="lexA"/>
    <property type="match status" value="1"/>
</dbReference>
<dbReference type="PANTHER" id="PTHR33516">
    <property type="entry name" value="LEXA REPRESSOR"/>
    <property type="match status" value="1"/>
</dbReference>
<dbReference type="PANTHER" id="PTHR33516:SF2">
    <property type="entry name" value="LEXA REPRESSOR-RELATED"/>
    <property type="match status" value="1"/>
</dbReference>
<dbReference type="Pfam" id="PF01726">
    <property type="entry name" value="LexA_DNA_bind"/>
    <property type="match status" value="1"/>
</dbReference>
<dbReference type="Pfam" id="PF00717">
    <property type="entry name" value="Peptidase_S24"/>
    <property type="match status" value="1"/>
</dbReference>
<dbReference type="PRINTS" id="PR00726">
    <property type="entry name" value="LEXASERPTASE"/>
</dbReference>
<dbReference type="SUPFAM" id="SSF51306">
    <property type="entry name" value="LexA/Signal peptidase"/>
    <property type="match status" value="1"/>
</dbReference>
<dbReference type="SUPFAM" id="SSF46785">
    <property type="entry name" value="Winged helix' DNA-binding domain"/>
    <property type="match status" value="1"/>
</dbReference>
<protein>
    <recommendedName>
        <fullName evidence="1">LexA repressor</fullName>
        <ecNumber evidence="1">3.4.21.88</ecNumber>
    </recommendedName>
</protein>
<sequence length="218" mass="23767">MATLTPRQQQIFDLIRDTIRNTGFPPTRAEIAAEFGFSSPNSAEEHLRALARKGVIELTPGASRGIRLKVTRSDSERPDQFSLPMPGVLQLTLPLVGRVAAGSPILAAEHIDRQYQVDASVFDERPDYLLRVRGLSMRDAGILDGDLLAVKKASEAANGKVVVARLGDDVTVKRLKKRGDTIELIAENPDFQNIVLHAGRDEFSLEGIAVGLIRSSGF</sequence>
<reference key="1">
    <citation type="submission" date="2000-12" db="EMBL/GenBank/DDBJ databases">
        <title>Characterization of Ralstonia eutropha SOS system.</title>
        <authorList>
            <person name="Casares L."/>
            <person name="Tapias A."/>
            <person name="Llagostera M."/>
            <person name="Barbe J."/>
        </authorList>
    </citation>
    <scope>NUCLEOTIDE SEQUENCE [GENOMIC DNA]</scope>
</reference>
<gene>
    <name evidence="1" type="primary">lexA</name>
</gene>
<evidence type="ECO:0000255" key="1">
    <source>
        <dbReference type="HAMAP-Rule" id="MF_00015"/>
    </source>
</evidence>
<organism>
    <name type="scientific">Cupriavidus necator</name>
    <name type="common">Alcaligenes eutrophus</name>
    <name type="synonym">Ralstonia eutropha</name>
    <dbReference type="NCBI Taxonomy" id="106590"/>
    <lineage>
        <taxon>Bacteria</taxon>
        <taxon>Pseudomonadati</taxon>
        <taxon>Pseudomonadota</taxon>
        <taxon>Betaproteobacteria</taxon>
        <taxon>Burkholderiales</taxon>
        <taxon>Burkholderiaceae</taxon>
        <taxon>Cupriavidus</taxon>
    </lineage>
</organism>
<proteinExistence type="inferred from homology"/>
<feature type="chain" id="PRO_0000170000" description="LexA repressor">
    <location>
        <begin position="1"/>
        <end position="218"/>
    </location>
</feature>
<feature type="DNA-binding region" description="H-T-H motif" evidence="1">
    <location>
        <begin position="28"/>
        <end position="48"/>
    </location>
</feature>
<feature type="active site" description="For autocatalytic cleavage activity" evidence="1">
    <location>
        <position position="136"/>
    </location>
</feature>
<feature type="active site" description="For autocatalytic cleavage activity" evidence="1">
    <location>
        <position position="173"/>
    </location>
</feature>
<feature type="site" description="Cleavage; by autolysis" evidence="1">
    <location>
        <begin position="101"/>
        <end position="102"/>
    </location>
</feature>
<name>LEXA_CUPNE</name>
<accession>Q9AGM5</accession>